<proteinExistence type="inferred from homology"/>
<feature type="chain" id="PRO_0000156250" description="Phosphopantetheine adenylyltransferase">
    <location>
        <begin position="1"/>
        <end position="160"/>
    </location>
</feature>
<feature type="binding site" evidence="1">
    <location>
        <begin position="10"/>
        <end position="11"/>
    </location>
    <ligand>
        <name>ATP</name>
        <dbReference type="ChEBI" id="CHEBI:30616"/>
    </ligand>
</feature>
<feature type="binding site" evidence="1">
    <location>
        <position position="10"/>
    </location>
    <ligand>
        <name>substrate</name>
    </ligand>
</feature>
<feature type="binding site" evidence="1">
    <location>
        <position position="18"/>
    </location>
    <ligand>
        <name>ATP</name>
        <dbReference type="ChEBI" id="CHEBI:30616"/>
    </ligand>
</feature>
<feature type="binding site" evidence="1">
    <location>
        <position position="42"/>
    </location>
    <ligand>
        <name>substrate</name>
    </ligand>
</feature>
<feature type="binding site" evidence="1">
    <location>
        <position position="74"/>
    </location>
    <ligand>
        <name>substrate</name>
    </ligand>
</feature>
<feature type="binding site" evidence="1">
    <location>
        <position position="88"/>
    </location>
    <ligand>
        <name>substrate</name>
    </ligand>
</feature>
<feature type="binding site" evidence="1">
    <location>
        <begin position="89"/>
        <end position="91"/>
    </location>
    <ligand>
        <name>ATP</name>
        <dbReference type="ChEBI" id="CHEBI:30616"/>
    </ligand>
</feature>
<feature type="binding site" evidence="1">
    <location>
        <position position="99"/>
    </location>
    <ligand>
        <name>ATP</name>
        <dbReference type="ChEBI" id="CHEBI:30616"/>
    </ligand>
</feature>
<feature type="binding site" evidence="1">
    <location>
        <begin position="124"/>
        <end position="130"/>
    </location>
    <ligand>
        <name>ATP</name>
        <dbReference type="ChEBI" id="CHEBI:30616"/>
    </ligand>
</feature>
<feature type="site" description="Transition state stabilizer" evidence="1">
    <location>
        <position position="18"/>
    </location>
</feature>
<accession>Q7MY37</accession>
<sequence>MKTKAIYPGTFDPVTYGHIDIVTRAADMFDHVLFAIANSARKNPMFTLDERITLAKEVTSHLDNVEVIGFCELMANFAKKQQANILIRGLRSVSDFEYEWQLANMNRHFMPELESVFLLPSQNLSFLSSSLIKDVALHDGDISSFLPEPIAQAMLKKLGK</sequence>
<name>COAD_PHOLL</name>
<dbReference type="EC" id="2.7.7.3" evidence="1"/>
<dbReference type="EMBL" id="BX571875">
    <property type="protein sequence ID" value="CAE17228.1"/>
    <property type="status" value="ALT_INIT"/>
    <property type="molecule type" value="Genomic_DNA"/>
</dbReference>
<dbReference type="RefSeq" id="WP_041380446.1">
    <property type="nucleotide sequence ID" value="NC_005126.1"/>
</dbReference>
<dbReference type="SMR" id="Q7MY37"/>
<dbReference type="STRING" id="243265.plu4856"/>
<dbReference type="GeneID" id="48851084"/>
<dbReference type="KEGG" id="plu:plu4856"/>
<dbReference type="eggNOG" id="COG0669">
    <property type="taxonomic scope" value="Bacteria"/>
</dbReference>
<dbReference type="HOGENOM" id="CLU_100149_0_1_6"/>
<dbReference type="OrthoDB" id="9806661at2"/>
<dbReference type="UniPathway" id="UPA00241">
    <property type="reaction ID" value="UER00355"/>
</dbReference>
<dbReference type="Proteomes" id="UP000002514">
    <property type="component" value="Chromosome"/>
</dbReference>
<dbReference type="GO" id="GO:0005737">
    <property type="term" value="C:cytoplasm"/>
    <property type="evidence" value="ECO:0007669"/>
    <property type="project" value="UniProtKB-SubCell"/>
</dbReference>
<dbReference type="GO" id="GO:0005524">
    <property type="term" value="F:ATP binding"/>
    <property type="evidence" value="ECO:0007669"/>
    <property type="project" value="UniProtKB-KW"/>
</dbReference>
<dbReference type="GO" id="GO:0004595">
    <property type="term" value="F:pantetheine-phosphate adenylyltransferase activity"/>
    <property type="evidence" value="ECO:0007669"/>
    <property type="project" value="UniProtKB-UniRule"/>
</dbReference>
<dbReference type="GO" id="GO:0015937">
    <property type="term" value="P:coenzyme A biosynthetic process"/>
    <property type="evidence" value="ECO:0007669"/>
    <property type="project" value="UniProtKB-UniRule"/>
</dbReference>
<dbReference type="CDD" id="cd02163">
    <property type="entry name" value="PPAT"/>
    <property type="match status" value="1"/>
</dbReference>
<dbReference type="FunFam" id="3.40.50.620:FF:000012">
    <property type="entry name" value="Phosphopantetheine adenylyltransferase"/>
    <property type="match status" value="1"/>
</dbReference>
<dbReference type="Gene3D" id="3.40.50.620">
    <property type="entry name" value="HUPs"/>
    <property type="match status" value="1"/>
</dbReference>
<dbReference type="HAMAP" id="MF_00151">
    <property type="entry name" value="PPAT_bact"/>
    <property type="match status" value="1"/>
</dbReference>
<dbReference type="InterPro" id="IPR004821">
    <property type="entry name" value="Cyt_trans-like"/>
</dbReference>
<dbReference type="InterPro" id="IPR001980">
    <property type="entry name" value="PPAT"/>
</dbReference>
<dbReference type="InterPro" id="IPR014729">
    <property type="entry name" value="Rossmann-like_a/b/a_fold"/>
</dbReference>
<dbReference type="NCBIfam" id="TIGR01510">
    <property type="entry name" value="coaD_prev_kdtB"/>
    <property type="match status" value="1"/>
</dbReference>
<dbReference type="NCBIfam" id="TIGR00125">
    <property type="entry name" value="cyt_tran_rel"/>
    <property type="match status" value="1"/>
</dbReference>
<dbReference type="PANTHER" id="PTHR21342">
    <property type="entry name" value="PHOSPHOPANTETHEINE ADENYLYLTRANSFERASE"/>
    <property type="match status" value="1"/>
</dbReference>
<dbReference type="PANTHER" id="PTHR21342:SF1">
    <property type="entry name" value="PHOSPHOPANTETHEINE ADENYLYLTRANSFERASE"/>
    <property type="match status" value="1"/>
</dbReference>
<dbReference type="Pfam" id="PF01467">
    <property type="entry name" value="CTP_transf_like"/>
    <property type="match status" value="1"/>
</dbReference>
<dbReference type="PRINTS" id="PR01020">
    <property type="entry name" value="LPSBIOSNTHSS"/>
</dbReference>
<dbReference type="SUPFAM" id="SSF52374">
    <property type="entry name" value="Nucleotidylyl transferase"/>
    <property type="match status" value="1"/>
</dbReference>
<comment type="function">
    <text evidence="1">Reversibly transfers an adenylyl group from ATP to 4'-phosphopantetheine, yielding dephospho-CoA (dPCoA) and pyrophosphate.</text>
</comment>
<comment type="catalytic activity">
    <reaction evidence="1">
        <text>(R)-4'-phosphopantetheine + ATP + H(+) = 3'-dephospho-CoA + diphosphate</text>
        <dbReference type="Rhea" id="RHEA:19801"/>
        <dbReference type="ChEBI" id="CHEBI:15378"/>
        <dbReference type="ChEBI" id="CHEBI:30616"/>
        <dbReference type="ChEBI" id="CHEBI:33019"/>
        <dbReference type="ChEBI" id="CHEBI:57328"/>
        <dbReference type="ChEBI" id="CHEBI:61723"/>
        <dbReference type="EC" id="2.7.7.3"/>
    </reaction>
</comment>
<comment type="cofactor">
    <cofactor evidence="1">
        <name>Mg(2+)</name>
        <dbReference type="ChEBI" id="CHEBI:18420"/>
    </cofactor>
</comment>
<comment type="pathway">
    <text evidence="1">Cofactor biosynthesis; coenzyme A biosynthesis; CoA from (R)-pantothenate: step 4/5.</text>
</comment>
<comment type="subunit">
    <text evidence="1">Homohexamer.</text>
</comment>
<comment type="subcellular location">
    <subcellularLocation>
        <location evidence="1">Cytoplasm</location>
    </subcellularLocation>
</comment>
<comment type="similarity">
    <text evidence="1">Belongs to the bacterial CoaD family.</text>
</comment>
<comment type="sequence caution" evidence="2">
    <conflict type="erroneous initiation">
        <sequence resource="EMBL-CDS" id="CAE17228"/>
    </conflict>
</comment>
<organism>
    <name type="scientific">Photorhabdus laumondii subsp. laumondii (strain DSM 15139 / CIP 105565 / TT01)</name>
    <name type="common">Photorhabdus luminescens subsp. laumondii</name>
    <dbReference type="NCBI Taxonomy" id="243265"/>
    <lineage>
        <taxon>Bacteria</taxon>
        <taxon>Pseudomonadati</taxon>
        <taxon>Pseudomonadota</taxon>
        <taxon>Gammaproteobacteria</taxon>
        <taxon>Enterobacterales</taxon>
        <taxon>Morganellaceae</taxon>
        <taxon>Photorhabdus</taxon>
    </lineage>
</organism>
<gene>
    <name evidence="1" type="primary">coaD</name>
    <name type="ordered locus">plu4856</name>
</gene>
<keyword id="KW-0067">ATP-binding</keyword>
<keyword id="KW-0173">Coenzyme A biosynthesis</keyword>
<keyword id="KW-0963">Cytoplasm</keyword>
<keyword id="KW-0460">Magnesium</keyword>
<keyword id="KW-0547">Nucleotide-binding</keyword>
<keyword id="KW-0548">Nucleotidyltransferase</keyword>
<keyword id="KW-1185">Reference proteome</keyword>
<keyword id="KW-0808">Transferase</keyword>
<reference key="1">
    <citation type="journal article" date="2003" name="Nat. Biotechnol.">
        <title>The genome sequence of the entomopathogenic bacterium Photorhabdus luminescens.</title>
        <authorList>
            <person name="Duchaud E."/>
            <person name="Rusniok C."/>
            <person name="Frangeul L."/>
            <person name="Buchrieser C."/>
            <person name="Givaudan A."/>
            <person name="Taourit S."/>
            <person name="Bocs S."/>
            <person name="Boursaux-Eude C."/>
            <person name="Chandler M."/>
            <person name="Charles J.-F."/>
            <person name="Dassa E."/>
            <person name="Derose R."/>
            <person name="Derzelle S."/>
            <person name="Freyssinet G."/>
            <person name="Gaudriault S."/>
            <person name="Medigue C."/>
            <person name="Lanois A."/>
            <person name="Powell K."/>
            <person name="Siguier P."/>
            <person name="Vincent R."/>
            <person name="Wingate V."/>
            <person name="Zouine M."/>
            <person name="Glaser P."/>
            <person name="Boemare N."/>
            <person name="Danchin A."/>
            <person name="Kunst F."/>
        </authorList>
    </citation>
    <scope>NUCLEOTIDE SEQUENCE [LARGE SCALE GENOMIC DNA]</scope>
    <source>
        <strain>DSM 15139 / CIP 105565 / TT01</strain>
    </source>
</reference>
<evidence type="ECO:0000255" key="1">
    <source>
        <dbReference type="HAMAP-Rule" id="MF_00151"/>
    </source>
</evidence>
<evidence type="ECO:0000305" key="2"/>
<protein>
    <recommendedName>
        <fullName evidence="1">Phosphopantetheine adenylyltransferase</fullName>
        <ecNumber evidence="1">2.7.7.3</ecNumber>
    </recommendedName>
    <alternativeName>
        <fullName evidence="1">Dephospho-CoA pyrophosphorylase</fullName>
    </alternativeName>
    <alternativeName>
        <fullName evidence="1">Pantetheine-phosphate adenylyltransferase</fullName>
        <shortName evidence="1">PPAT</shortName>
    </alternativeName>
</protein>